<dbReference type="EC" id="6.3.4.4" evidence="2"/>
<dbReference type="EMBL" id="U09005">
    <property type="protein sequence ID" value="AAA62188.1"/>
    <property type="molecule type" value="Genomic_DNA"/>
</dbReference>
<dbReference type="EMBL" id="BA000031">
    <property type="protein sequence ID" value="BAC61075.1"/>
    <property type="molecule type" value="Genomic_DNA"/>
</dbReference>
<dbReference type="RefSeq" id="NP_799191.1">
    <property type="nucleotide sequence ID" value="NC_004603.1"/>
</dbReference>
<dbReference type="RefSeq" id="WP_005460670.1">
    <property type="nucleotide sequence ID" value="NC_004603.1"/>
</dbReference>
<dbReference type="SMR" id="P40607"/>
<dbReference type="GeneID" id="1190362"/>
<dbReference type="KEGG" id="vpa:VP2812"/>
<dbReference type="PATRIC" id="fig|223926.6.peg.2703"/>
<dbReference type="eggNOG" id="COG0104">
    <property type="taxonomic scope" value="Bacteria"/>
</dbReference>
<dbReference type="HOGENOM" id="CLU_029848_0_0_6"/>
<dbReference type="UniPathway" id="UPA00075">
    <property type="reaction ID" value="UER00335"/>
</dbReference>
<dbReference type="Proteomes" id="UP000002493">
    <property type="component" value="Chromosome 1"/>
</dbReference>
<dbReference type="GO" id="GO:0005737">
    <property type="term" value="C:cytoplasm"/>
    <property type="evidence" value="ECO:0007669"/>
    <property type="project" value="UniProtKB-SubCell"/>
</dbReference>
<dbReference type="GO" id="GO:0004019">
    <property type="term" value="F:adenylosuccinate synthase activity"/>
    <property type="evidence" value="ECO:0007669"/>
    <property type="project" value="UniProtKB-UniRule"/>
</dbReference>
<dbReference type="GO" id="GO:0005525">
    <property type="term" value="F:GTP binding"/>
    <property type="evidence" value="ECO:0007669"/>
    <property type="project" value="UniProtKB-UniRule"/>
</dbReference>
<dbReference type="GO" id="GO:0000287">
    <property type="term" value="F:magnesium ion binding"/>
    <property type="evidence" value="ECO:0007669"/>
    <property type="project" value="UniProtKB-UniRule"/>
</dbReference>
<dbReference type="GO" id="GO:0044208">
    <property type="term" value="P:'de novo' AMP biosynthetic process"/>
    <property type="evidence" value="ECO:0007669"/>
    <property type="project" value="UniProtKB-UniRule"/>
</dbReference>
<dbReference type="GO" id="GO:0046040">
    <property type="term" value="P:IMP metabolic process"/>
    <property type="evidence" value="ECO:0007669"/>
    <property type="project" value="TreeGrafter"/>
</dbReference>
<dbReference type="CDD" id="cd03108">
    <property type="entry name" value="AdSS"/>
    <property type="match status" value="1"/>
</dbReference>
<dbReference type="FunFam" id="1.10.300.10:FF:000001">
    <property type="entry name" value="Adenylosuccinate synthetase"/>
    <property type="match status" value="1"/>
</dbReference>
<dbReference type="FunFam" id="3.90.170.10:FF:000001">
    <property type="entry name" value="Adenylosuccinate synthetase"/>
    <property type="match status" value="1"/>
</dbReference>
<dbReference type="Gene3D" id="3.40.440.10">
    <property type="entry name" value="Adenylosuccinate Synthetase, subunit A, domain 1"/>
    <property type="match status" value="1"/>
</dbReference>
<dbReference type="Gene3D" id="1.10.300.10">
    <property type="entry name" value="Adenylosuccinate Synthetase, subunit A, domain 2"/>
    <property type="match status" value="1"/>
</dbReference>
<dbReference type="Gene3D" id="3.90.170.10">
    <property type="entry name" value="Adenylosuccinate Synthetase, subunit A, domain 3"/>
    <property type="match status" value="1"/>
</dbReference>
<dbReference type="HAMAP" id="MF_00011">
    <property type="entry name" value="Adenylosucc_synth"/>
    <property type="match status" value="1"/>
</dbReference>
<dbReference type="InterPro" id="IPR018220">
    <property type="entry name" value="Adenylosuccin_syn_GTP-bd"/>
</dbReference>
<dbReference type="InterPro" id="IPR033128">
    <property type="entry name" value="Adenylosuccin_syn_Lys_AS"/>
</dbReference>
<dbReference type="InterPro" id="IPR042109">
    <property type="entry name" value="Adenylosuccinate_synth_dom1"/>
</dbReference>
<dbReference type="InterPro" id="IPR042110">
    <property type="entry name" value="Adenylosuccinate_synth_dom2"/>
</dbReference>
<dbReference type="InterPro" id="IPR042111">
    <property type="entry name" value="Adenylosuccinate_synth_dom3"/>
</dbReference>
<dbReference type="InterPro" id="IPR001114">
    <property type="entry name" value="Adenylosuccinate_synthetase"/>
</dbReference>
<dbReference type="InterPro" id="IPR027417">
    <property type="entry name" value="P-loop_NTPase"/>
</dbReference>
<dbReference type="NCBIfam" id="NF002223">
    <property type="entry name" value="PRK01117.1"/>
    <property type="match status" value="1"/>
</dbReference>
<dbReference type="NCBIfam" id="TIGR00184">
    <property type="entry name" value="purA"/>
    <property type="match status" value="1"/>
</dbReference>
<dbReference type="PANTHER" id="PTHR11846">
    <property type="entry name" value="ADENYLOSUCCINATE SYNTHETASE"/>
    <property type="match status" value="1"/>
</dbReference>
<dbReference type="PANTHER" id="PTHR11846:SF0">
    <property type="entry name" value="ADENYLOSUCCINATE SYNTHETASE"/>
    <property type="match status" value="1"/>
</dbReference>
<dbReference type="Pfam" id="PF00709">
    <property type="entry name" value="Adenylsucc_synt"/>
    <property type="match status" value="1"/>
</dbReference>
<dbReference type="SMART" id="SM00788">
    <property type="entry name" value="Adenylsucc_synt"/>
    <property type="match status" value="1"/>
</dbReference>
<dbReference type="SUPFAM" id="SSF52540">
    <property type="entry name" value="P-loop containing nucleoside triphosphate hydrolases"/>
    <property type="match status" value="1"/>
</dbReference>
<dbReference type="PROSITE" id="PS01266">
    <property type="entry name" value="ADENYLOSUCCIN_SYN_1"/>
    <property type="match status" value="1"/>
</dbReference>
<dbReference type="PROSITE" id="PS00513">
    <property type="entry name" value="ADENYLOSUCCIN_SYN_2"/>
    <property type="match status" value="1"/>
</dbReference>
<name>PURA_VIBPA</name>
<organism>
    <name type="scientific">Vibrio parahaemolyticus serotype O3:K6 (strain RIMD 2210633)</name>
    <dbReference type="NCBI Taxonomy" id="223926"/>
    <lineage>
        <taxon>Bacteria</taxon>
        <taxon>Pseudomonadati</taxon>
        <taxon>Pseudomonadota</taxon>
        <taxon>Gammaproteobacteria</taxon>
        <taxon>Vibrionales</taxon>
        <taxon>Vibrionaceae</taxon>
        <taxon>Vibrio</taxon>
    </lineage>
</organism>
<evidence type="ECO:0000250" key="1"/>
<evidence type="ECO:0000255" key="2">
    <source>
        <dbReference type="HAMAP-Rule" id="MF_00011"/>
    </source>
</evidence>
<keyword id="KW-0963">Cytoplasm</keyword>
<keyword id="KW-0342">GTP-binding</keyword>
<keyword id="KW-0436">Ligase</keyword>
<keyword id="KW-0460">Magnesium</keyword>
<keyword id="KW-0479">Metal-binding</keyword>
<keyword id="KW-0547">Nucleotide-binding</keyword>
<keyword id="KW-0658">Purine biosynthesis</keyword>
<feature type="initiator methionine" description="Removed" evidence="1">
    <location>
        <position position="1"/>
    </location>
</feature>
<feature type="chain" id="PRO_0000095255" description="Adenylosuccinate synthetase">
    <location>
        <begin position="2"/>
        <end position="438"/>
    </location>
</feature>
<feature type="active site" description="Proton acceptor" evidence="2">
    <location>
        <position position="14"/>
    </location>
</feature>
<feature type="active site" description="Proton donor" evidence="2">
    <location>
        <position position="42"/>
    </location>
</feature>
<feature type="binding site" evidence="2">
    <location>
        <begin position="13"/>
        <end position="19"/>
    </location>
    <ligand>
        <name>GTP</name>
        <dbReference type="ChEBI" id="CHEBI:37565"/>
    </ligand>
</feature>
<feature type="binding site" description="in other chain" evidence="2">
    <location>
        <begin position="14"/>
        <end position="17"/>
    </location>
    <ligand>
        <name>IMP</name>
        <dbReference type="ChEBI" id="CHEBI:58053"/>
        <note>ligand shared between dimeric partners</note>
    </ligand>
</feature>
<feature type="binding site" evidence="2">
    <location>
        <position position="14"/>
    </location>
    <ligand>
        <name>Mg(2+)</name>
        <dbReference type="ChEBI" id="CHEBI:18420"/>
    </ligand>
</feature>
<feature type="binding site" description="in other chain" evidence="2">
    <location>
        <begin position="39"/>
        <end position="42"/>
    </location>
    <ligand>
        <name>IMP</name>
        <dbReference type="ChEBI" id="CHEBI:58053"/>
        <note>ligand shared between dimeric partners</note>
    </ligand>
</feature>
<feature type="binding site" evidence="2">
    <location>
        <begin position="41"/>
        <end position="43"/>
    </location>
    <ligand>
        <name>GTP</name>
        <dbReference type="ChEBI" id="CHEBI:37565"/>
    </ligand>
</feature>
<feature type="binding site" evidence="2">
    <location>
        <position position="41"/>
    </location>
    <ligand>
        <name>Mg(2+)</name>
        <dbReference type="ChEBI" id="CHEBI:18420"/>
    </ligand>
</feature>
<feature type="binding site" description="in other chain" evidence="2">
    <location>
        <position position="130"/>
    </location>
    <ligand>
        <name>IMP</name>
        <dbReference type="ChEBI" id="CHEBI:58053"/>
        <note>ligand shared between dimeric partners</note>
    </ligand>
</feature>
<feature type="binding site" evidence="2">
    <location>
        <position position="144"/>
    </location>
    <ligand>
        <name>IMP</name>
        <dbReference type="ChEBI" id="CHEBI:58053"/>
        <note>ligand shared between dimeric partners</note>
    </ligand>
</feature>
<feature type="binding site" description="in other chain" evidence="2">
    <location>
        <position position="225"/>
    </location>
    <ligand>
        <name>IMP</name>
        <dbReference type="ChEBI" id="CHEBI:58053"/>
        <note>ligand shared between dimeric partners</note>
    </ligand>
</feature>
<feature type="binding site" description="in other chain" evidence="2">
    <location>
        <position position="240"/>
    </location>
    <ligand>
        <name>IMP</name>
        <dbReference type="ChEBI" id="CHEBI:58053"/>
        <note>ligand shared between dimeric partners</note>
    </ligand>
</feature>
<feature type="binding site" evidence="2">
    <location>
        <begin position="306"/>
        <end position="312"/>
    </location>
    <ligand>
        <name>substrate</name>
    </ligand>
</feature>
<feature type="binding site" description="in other chain" evidence="2">
    <location>
        <position position="310"/>
    </location>
    <ligand>
        <name>IMP</name>
        <dbReference type="ChEBI" id="CHEBI:58053"/>
        <note>ligand shared between dimeric partners</note>
    </ligand>
</feature>
<feature type="binding site" evidence="2">
    <location>
        <position position="312"/>
    </location>
    <ligand>
        <name>GTP</name>
        <dbReference type="ChEBI" id="CHEBI:37565"/>
    </ligand>
</feature>
<feature type="binding site" evidence="2">
    <location>
        <begin position="338"/>
        <end position="340"/>
    </location>
    <ligand>
        <name>GTP</name>
        <dbReference type="ChEBI" id="CHEBI:37565"/>
    </ligand>
</feature>
<feature type="binding site" evidence="2">
    <location>
        <begin position="421"/>
        <end position="423"/>
    </location>
    <ligand>
        <name>GTP</name>
        <dbReference type="ChEBI" id="CHEBI:37565"/>
    </ligand>
</feature>
<protein>
    <recommendedName>
        <fullName evidence="2">Adenylosuccinate synthetase</fullName>
        <shortName evidence="2">AMPSase</shortName>
        <shortName evidence="2">AdSS</shortName>
        <ecNumber evidence="2">6.3.4.4</ecNumber>
    </recommendedName>
    <alternativeName>
        <fullName evidence="2">IMP--aspartate ligase</fullName>
    </alternativeName>
</protein>
<accession>P40607</accession>
<comment type="function">
    <text evidence="2">Plays an important role in the de novo pathway of purine nucleotide biosynthesis. Catalyzes the first committed step in the biosynthesis of AMP from IMP.</text>
</comment>
<comment type="catalytic activity">
    <reaction evidence="2">
        <text>IMP + L-aspartate + GTP = N(6)-(1,2-dicarboxyethyl)-AMP + GDP + phosphate + 2 H(+)</text>
        <dbReference type="Rhea" id="RHEA:15753"/>
        <dbReference type="ChEBI" id="CHEBI:15378"/>
        <dbReference type="ChEBI" id="CHEBI:29991"/>
        <dbReference type="ChEBI" id="CHEBI:37565"/>
        <dbReference type="ChEBI" id="CHEBI:43474"/>
        <dbReference type="ChEBI" id="CHEBI:57567"/>
        <dbReference type="ChEBI" id="CHEBI:58053"/>
        <dbReference type="ChEBI" id="CHEBI:58189"/>
        <dbReference type="EC" id="6.3.4.4"/>
    </reaction>
</comment>
<comment type="cofactor">
    <cofactor evidence="2">
        <name>Mg(2+)</name>
        <dbReference type="ChEBI" id="CHEBI:18420"/>
    </cofactor>
    <text evidence="2">Binds 1 Mg(2+) ion per subunit.</text>
</comment>
<comment type="pathway">
    <text evidence="2">Purine metabolism; AMP biosynthesis via de novo pathway; AMP from IMP: step 1/2.</text>
</comment>
<comment type="subunit">
    <text evidence="2">Homodimer.</text>
</comment>
<comment type="subcellular location">
    <subcellularLocation>
        <location evidence="2">Cytoplasm</location>
    </subcellularLocation>
</comment>
<comment type="similarity">
    <text evidence="2">Belongs to the adenylosuccinate synthetase family.</text>
</comment>
<gene>
    <name evidence="2" type="primary">purA</name>
    <name type="ordered locus">VP2812</name>
</gene>
<proteinExistence type="inferred from homology"/>
<reference key="1">
    <citation type="submission" date="1994-04" db="EMBL/GenBank/DDBJ databases">
        <authorList>
            <person name="McCarter L.L."/>
        </authorList>
    </citation>
    <scope>NUCLEOTIDE SEQUENCE [GENOMIC DNA]</scope>
    <source>
        <strain>BB22</strain>
    </source>
</reference>
<reference key="2">
    <citation type="journal article" date="2003" name="Lancet">
        <title>Genome sequence of Vibrio parahaemolyticus: a pathogenic mechanism distinct from that of V. cholerae.</title>
        <authorList>
            <person name="Makino K."/>
            <person name="Oshima K."/>
            <person name="Kurokawa K."/>
            <person name="Yokoyama K."/>
            <person name="Uda T."/>
            <person name="Tagomori K."/>
            <person name="Iijima Y."/>
            <person name="Najima M."/>
            <person name="Nakano M."/>
            <person name="Yamashita A."/>
            <person name="Kubota Y."/>
            <person name="Kimura S."/>
            <person name="Yasunaga T."/>
            <person name="Honda T."/>
            <person name="Shinagawa H."/>
            <person name="Hattori M."/>
            <person name="Iida T."/>
        </authorList>
    </citation>
    <scope>NUCLEOTIDE SEQUENCE [LARGE SCALE GENOMIC DNA]</scope>
    <source>
        <strain>RIMD 2210633</strain>
    </source>
</reference>
<sequence>MGNNVVVLGTQWGDEGKGKIVDLLTEDAKYVVRYQGGHNAGHTLVIDGEKTVLHLIPSGILRDNVKCVIGNGVVLSPEALLKEMKPLEERGIPVRERLFISEACPLILPYHVAMDQAREIARGKKAIGTTGRGIGPAYEDKVARRGLRVGDLFDMEAFAEKLKEVMEYHNFQLVNFYKAEPVSYEAVLEEAKGYAELLTSMVIDVTDELDAARKRGDKIMFEGAQGTLLDIDHGTYPYVTSSNTTAGGVAAGSGFGPRHIGYILGIAKAYCTRVGAGPFPTELYDGLEKQDPVGKHLGTVGHEFGATTGRLRRTGWFDAVAMRRAIQINSVSGFCLTKLDVLDGLEELKICTGYKMEDGSVLEVSPMAAEAFEKATPIYETMPGWSENTFGAKSLDALPQAALNYIKRIEELTGVPVDIISTGPDRNETIIKVHPFEA</sequence>